<organism>
    <name type="scientific">Tetrahymena pyriformis</name>
    <dbReference type="NCBI Taxonomy" id="5908"/>
    <lineage>
        <taxon>Eukaryota</taxon>
        <taxon>Sar</taxon>
        <taxon>Alveolata</taxon>
        <taxon>Ciliophora</taxon>
        <taxon>Intramacronucleata</taxon>
        <taxon>Oligohymenophorea</taxon>
        <taxon>Hymenostomatida</taxon>
        <taxon>Tetrahymenina</taxon>
        <taxon>Tetrahymenidae</taxon>
        <taxon>Tetrahymena</taxon>
    </lineage>
</organism>
<comment type="function">
    <text>Tubulin is the major constituent of microtubules, a cylinder consisting of laterally associated linear protofilaments composed of alpha- and beta-tubulin heterodimers. Microtubules grow by the addition of GTP-tubulin dimers to the microtubule end, where a stabilizing cap forms. Below the cap, tubulin dimers are in GDP-bound state, owing to GTPase activity of alpha-tubulin.</text>
</comment>
<comment type="cofactor">
    <cofactor evidence="1">
        <name>Mg(2+)</name>
        <dbReference type="ChEBI" id="CHEBI:18420"/>
    </cofactor>
</comment>
<comment type="subunit">
    <text>Dimer of alpha and beta chains. A typical microtubule is a hollow water-filled tube with an outer diameter of 25 nm and an inner diameter of 15 nM. Alpha-beta heterodimers associate head-to-tail to form protofilaments running lengthwise along the microtubule wall with the beta-tubulin subunit facing the microtubule plus end conferring a structural polarity. Microtubules usually have 13 protofilaments but different protofilament numbers can be found in some organisms and specialized cells.</text>
</comment>
<comment type="subcellular location">
    <subcellularLocation>
        <location>Cytoplasm</location>
        <location>Cytoskeleton</location>
    </subcellularLocation>
</comment>
<comment type="miscellaneous">
    <text>The sequences of the two genes coding for beta-tubulin are identical.</text>
</comment>
<comment type="similarity">
    <text evidence="4">Belongs to the tubulin family.</text>
</comment>
<dbReference type="EMBL" id="X12768">
    <property type="protein sequence ID" value="CAA31257.1"/>
    <property type="molecule type" value="Genomic_DNA"/>
</dbReference>
<dbReference type="EMBL" id="X12769">
    <property type="status" value="NOT_ANNOTATED_CDS"/>
    <property type="molecule type" value="Genomic_DNA"/>
</dbReference>
<dbReference type="PIR" id="S01768">
    <property type="entry name" value="S01768"/>
</dbReference>
<dbReference type="PIR" id="S01769">
    <property type="entry name" value="S01769"/>
</dbReference>
<dbReference type="SMR" id="P10876"/>
<dbReference type="GO" id="GO:0005737">
    <property type="term" value="C:cytoplasm"/>
    <property type="evidence" value="ECO:0007669"/>
    <property type="project" value="UniProtKB-KW"/>
</dbReference>
<dbReference type="GO" id="GO:0005874">
    <property type="term" value="C:microtubule"/>
    <property type="evidence" value="ECO:0007669"/>
    <property type="project" value="UniProtKB-KW"/>
</dbReference>
<dbReference type="GO" id="GO:0005525">
    <property type="term" value="F:GTP binding"/>
    <property type="evidence" value="ECO:0007669"/>
    <property type="project" value="UniProtKB-KW"/>
</dbReference>
<dbReference type="GO" id="GO:0003924">
    <property type="term" value="F:GTPase activity"/>
    <property type="evidence" value="ECO:0007669"/>
    <property type="project" value="InterPro"/>
</dbReference>
<dbReference type="GO" id="GO:0046872">
    <property type="term" value="F:metal ion binding"/>
    <property type="evidence" value="ECO:0007669"/>
    <property type="project" value="UniProtKB-KW"/>
</dbReference>
<dbReference type="GO" id="GO:0005200">
    <property type="term" value="F:structural constituent of cytoskeleton"/>
    <property type="evidence" value="ECO:0007669"/>
    <property type="project" value="InterPro"/>
</dbReference>
<dbReference type="GO" id="GO:0007017">
    <property type="term" value="P:microtubule-based process"/>
    <property type="evidence" value="ECO:0007669"/>
    <property type="project" value="InterPro"/>
</dbReference>
<dbReference type="CDD" id="cd02187">
    <property type="entry name" value="beta_tubulin"/>
    <property type="match status" value="1"/>
</dbReference>
<dbReference type="FunFam" id="1.10.287.600:FF:000006">
    <property type="entry name" value="Tubulin beta chain"/>
    <property type="match status" value="1"/>
</dbReference>
<dbReference type="FunFam" id="3.30.1330.20:FF:000002">
    <property type="entry name" value="Tubulin beta chain"/>
    <property type="match status" value="1"/>
</dbReference>
<dbReference type="FunFam" id="3.40.50.1440:FF:000005">
    <property type="entry name" value="Tubulin beta chain"/>
    <property type="match status" value="1"/>
</dbReference>
<dbReference type="Gene3D" id="1.10.287.600">
    <property type="entry name" value="Helix hairpin bin"/>
    <property type="match status" value="1"/>
</dbReference>
<dbReference type="Gene3D" id="3.30.1330.20">
    <property type="entry name" value="Tubulin/FtsZ, C-terminal domain"/>
    <property type="match status" value="1"/>
</dbReference>
<dbReference type="Gene3D" id="3.40.50.1440">
    <property type="entry name" value="Tubulin/FtsZ, GTPase domain"/>
    <property type="match status" value="1"/>
</dbReference>
<dbReference type="InterPro" id="IPR013838">
    <property type="entry name" value="Beta-tubulin_BS"/>
</dbReference>
<dbReference type="InterPro" id="IPR002453">
    <property type="entry name" value="Beta_tubulin"/>
</dbReference>
<dbReference type="InterPro" id="IPR008280">
    <property type="entry name" value="Tub_FtsZ_C"/>
</dbReference>
<dbReference type="InterPro" id="IPR000217">
    <property type="entry name" value="Tubulin"/>
</dbReference>
<dbReference type="InterPro" id="IPR037103">
    <property type="entry name" value="Tubulin/FtsZ-like_C"/>
</dbReference>
<dbReference type="InterPro" id="IPR018316">
    <property type="entry name" value="Tubulin/FtsZ_2-layer-sand-dom"/>
</dbReference>
<dbReference type="InterPro" id="IPR036525">
    <property type="entry name" value="Tubulin/FtsZ_GTPase_sf"/>
</dbReference>
<dbReference type="InterPro" id="IPR023123">
    <property type="entry name" value="Tubulin_C"/>
</dbReference>
<dbReference type="InterPro" id="IPR017975">
    <property type="entry name" value="Tubulin_CS"/>
</dbReference>
<dbReference type="InterPro" id="IPR003008">
    <property type="entry name" value="Tubulin_FtsZ_GTPase"/>
</dbReference>
<dbReference type="PANTHER" id="PTHR11588">
    <property type="entry name" value="TUBULIN"/>
    <property type="match status" value="1"/>
</dbReference>
<dbReference type="Pfam" id="PF00091">
    <property type="entry name" value="Tubulin"/>
    <property type="match status" value="1"/>
</dbReference>
<dbReference type="Pfam" id="PF03953">
    <property type="entry name" value="Tubulin_C"/>
    <property type="match status" value="1"/>
</dbReference>
<dbReference type="PRINTS" id="PR01163">
    <property type="entry name" value="BETATUBULIN"/>
</dbReference>
<dbReference type="PRINTS" id="PR01161">
    <property type="entry name" value="TUBULIN"/>
</dbReference>
<dbReference type="SMART" id="SM00864">
    <property type="entry name" value="Tubulin"/>
    <property type="match status" value="1"/>
</dbReference>
<dbReference type="SMART" id="SM00865">
    <property type="entry name" value="Tubulin_C"/>
    <property type="match status" value="1"/>
</dbReference>
<dbReference type="SUPFAM" id="SSF55307">
    <property type="entry name" value="Tubulin C-terminal domain-like"/>
    <property type="match status" value="1"/>
</dbReference>
<dbReference type="SUPFAM" id="SSF52490">
    <property type="entry name" value="Tubulin nucleotide-binding domain-like"/>
    <property type="match status" value="1"/>
</dbReference>
<dbReference type="PROSITE" id="PS00227">
    <property type="entry name" value="TUBULIN"/>
    <property type="match status" value="1"/>
</dbReference>
<dbReference type="PROSITE" id="PS00228">
    <property type="entry name" value="TUBULIN_B_AUTOREG"/>
    <property type="match status" value="1"/>
</dbReference>
<reference key="1">
    <citation type="journal article" date="1988" name="J. Mol. Biol.">
        <title>Sequence of one alpha- and two beta-tubulin genes of Tetrahymena pyriformis. Structural and functional relationships with other eukaryotic tubulin genes.</title>
        <authorList>
            <person name="Barahona I."/>
            <person name="Soares H."/>
            <person name="Cyrne L."/>
            <person name="Penque D."/>
            <person name="Denoulet P."/>
            <person name="Rodrigues-Pousada C."/>
        </authorList>
    </citation>
    <scope>NUCLEOTIDE SEQUENCE [GENOMIC DNA]</scope>
    <source>
        <strain>CGL</strain>
    </source>
</reference>
<gene>
    <name type="primary">BETA-TT1</name>
</gene>
<gene>
    <name type="primary">BETA-TT2</name>
</gene>
<evidence type="ECO:0000250" key="1">
    <source>
        <dbReference type="UniProtKB" id="P68363"/>
    </source>
</evidence>
<evidence type="ECO:0000250" key="2">
    <source>
        <dbReference type="UniProtKB" id="Q13509"/>
    </source>
</evidence>
<evidence type="ECO:0000256" key="3">
    <source>
        <dbReference type="SAM" id="MobiDB-lite"/>
    </source>
</evidence>
<evidence type="ECO:0000305" key="4"/>
<feature type="chain" id="PRO_0000048315" description="Tubulin beta chain">
    <location>
        <begin position="1"/>
        <end position="443"/>
    </location>
</feature>
<feature type="region of interest" description="Disordered" evidence="3">
    <location>
        <begin position="424"/>
        <end position="443"/>
    </location>
</feature>
<feature type="compositionally biased region" description="Acidic residues" evidence="3">
    <location>
        <begin position="429"/>
        <end position="443"/>
    </location>
</feature>
<feature type="binding site" evidence="2">
    <location>
        <position position="11"/>
    </location>
    <ligand>
        <name>GTP</name>
        <dbReference type="ChEBI" id="CHEBI:37565"/>
    </ligand>
</feature>
<feature type="binding site" evidence="1">
    <location>
        <position position="69"/>
    </location>
    <ligand>
        <name>GTP</name>
        <dbReference type="ChEBI" id="CHEBI:37565"/>
    </ligand>
</feature>
<feature type="binding site" evidence="1">
    <location>
        <position position="69"/>
    </location>
    <ligand>
        <name>Mg(2+)</name>
        <dbReference type="ChEBI" id="CHEBI:18420"/>
    </ligand>
</feature>
<feature type="binding site" evidence="2">
    <location>
        <position position="138"/>
    </location>
    <ligand>
        <name>GTP</name>
        <dbReference type="ChEBI" id="CHEBI:37565"/>
    </ligand>
</feature>
<feature type="binding site" evidence="2">
    <location>
        <position position="142"/>
    </location>
    <ligand>
        <name>GTP</name>
        <dbReference type="ChEBI" id="CHEBI:37565"/>
    </ligand>
</feature>
<feature type="binding site" evidence="2">
    <location>
        <position position="143"/>
    </location>
    <ligand>
        <name>GTP</name>
        <dbReference type="ChEBI" id="CHEBI:37565"/>
    </ligand>
</feature>
<feature type="binding site" evidence="2">
    <location>
        <position position="144"/>
    </location>
    <ligand>
        <name>GTP</name>
        <dbReference type="ChEBI" id="CHEBI:37565"/>
    </ligand>
</feature>
<feature type="binding site" evidence="2">
    <location>
        <position position="204"/>
    </location>
    <ligand>
        <name>GTP</name>
        <dbReference type="ChEBI" id="CHEBI:37565"/>
    </ligand>
</feature>
<feature type="binding site" evidence="2">
    <location>
        <position position="226"/>
    </location>
    <ligand>
        <name>GTP</name>
        <dbReference type="ChEBI" id="CHEBI:37565"/>
    </ligand>
</feature>
<sequence>MREIVHIQGGQCGNQIGAKFWEVISDEHGIDPTGTYHGDSDLQLERINVYYNEATGGRYVPRAILMDLEPGTMDSVRAGPFGQLFRPDNFVFGQTGAGNNWAKGHYTEGAELIDSVLDVVRKEAEGCDCLQGFQITHSLGGGTGSGMGTLLISKVREEYPDRIMETFSVVPSPKVSDTVVEPYNATLSVHQLVENADECMVIDNEALYDICFRTLKLTTPTYGNLNHLVSAAMSGVTCCLRFPGQLNSDLRKLAVNLIPFPRLHFFMIGFAPLTSRGSQQYRALTVPELTQQMFDAKNMMCAADPRHGRYLTASALFRGRMSTKEVDEQMLNVQNKNSSYFVEWIPNNIKSSICDIPPKGLKMAVTFVGNSTAIQEMFKRVAEQFTAMFRRKAFLHWYTGEGMDEMEFTEAESNMNDLVSEYQQYQDATAEEEGEFEEEEGEN</sequence>
<proteinExistence type="inferred from homology"/>
<keyword id="KW-0963">Cytoplasm</keyword>
<keyword id="KW-0206">Cytoskeleton</keyword>
<keyword id="KW-0342">GTP-binding</keyword>
<keyword id="KW-0460">Magnesium</keyword>
<keyword id="KW-0479">Metal-binding</keyword>
<keyword id="KW-0493">Microtubule</keyword>
<keyword id="KW-0547">Nucleotide-binding</keyword>
<name>TBB_TETPY</name>
<protein>
    <recommendedName>
        <fullName>Tubulin beta chain</fullName>
    </recommendedName>
    <alternativeName>
        <fullName>Beta-tubulin</fullName>
    </alternativeName>
</protein>
<accession>P10876</accession>